<accession>O52341</accession>
<protein>
    <recommendedName>
        <fullName evidence="1">Small ribosomal subunit protein uS17</fullName>
    </recommendedName>
    <alternativeName>
        <fullName evidence="2">30S ribosomal protein S17</fullName>
    </alternativeName>
</protein>
<dbReference type="EMBL" id="AF036708">
    <property type="protein sequence ID" value="AAB95396.1"/>
    <property type="molecule type" value="Genomic_DNA"/>
</dbReference>
<dbReference type="EMBL" id="AE015450">
    <property type="protein sequence ID" value="AAP56410.1"/>
    <property type="molecule type" value="Genomic_DNA"/>
</dbReference>
<dbReference type="RefSeq" id="WP_011113289.1">
    <property type="nucleotide sequence ID" value="NC_004829.2"/>
</dbReference>
<dbReference type="SMR" id="O52341"/>
<dbReference type="GeneID" id="93509878"/>
<dbReference type="KEGG" id="mga:MGA_0725"/>
<dbReference type="HOGENOM" id="CLU_073626_1_0_14"/>
<dbReference type="OrthoDB" id="9811714at2"/>
<dbReference type="Proteomes" id="UP000001418">
    <property type="component" value="Chromosome"/>
</dbReference>
<dbReference type="GO" id="GO:0022627">
    <property type="term" value="C:cytosolic small ribosomal subunit"/>
    <property type="evidence" value="ECO:0007669"/>
    <property type="project" value="TreeGrafter"/>
</dbReference>
<dbReference type="GO" id="GO:0019843">
    <property type="term" value="F:rRNA binding"/>
    <property type="evidence" value="ECO:0007669"/>
    <property type="project" value="UniProtKB-UniRule"/>
</dbReference>
<dbReference type="GO" id="GO:0003735">
    <property type="term" value="F:structural constituent of ribosome"/>
    <property type="evidence" value="ECO:0007669"/>
    <property type="project" value="InterPro"/>
</dbReference>
<dbReference type="GO" id="GO:0006412">
    <property type="term" value="P:translation"/>
    <property type="evidence" value="ECO:0007669"/>
    <property type="project" value="UniProtKB-UniRule"/>
</dbReference>
<dbReference type="CDD" id="cd00364">
    <property type="entry name" value="Ribosomal_uS17"/>
    <property type="match status" value="1"/>
</dbReference>
<dbReference type="Gene3D" id="2.40.50.140">
    <property type="entry name" value="Nucleic acid-binding proteins"/>
    <property type="match status" value="1"/>
</dbReference>
<dbReference type="HAMAP" id="MF_01345_B">
    <property type="entry name" value="Ribosomal_uS17_B"/>
    <property type="match status" value="1"/>
</dbReference>
<dbReference type="InterPro" id="IPR012340">
    <property type="entry name" value="NA-bd_OB-fold"/>
</dbReference>
<dbReference type="InterPro" id="IPR000266">
    <property type="entry name" value="Ribosomal_uS17"/>
</dbReference>
<dbReference type="InterPro" id="IPR019984">
    <property type="entry name" value="Ribosomal_uS17_bact/chlr"/>
</dbReference>
<dbReference type="InterPro" id="IPR019979">
    <property type="entry name" value="Ribosomal_uS17_CS"/>
</dbReference>
<dbReference type="NCBIfam" id="NF004123">
    <property type="entry name" value="PRK05610.1"/>
    <property type="match status" value="1"/>
</dbReference>
<dbReference type="NCBIfam" id="TIGR03635">
    <property type="entry name" value="uS17_bact"/>
    <property type="match status" value="1"/>
</dbReference>
<dbReference type="PANTHER" id="PTHR10744">
    <property type="entry name" value="40S RIBOSOMAL PROTEIN S11 FAMILY MEMBER"/>
    <property type="match status" value="1"/>
</dbReference>
<dbReference type="PANTHER" id="PTHR10744:SF1">
    <property type="entry name" value="SMALL RIBOSOMAL SUBUNIT PROTEIN US17M"/>
    <property type="match status" value="1"/>
</dbReference>
<dbReference type="Pfam" id="PF00366">
    <property type="entry name" value="Ribosomal_S17"/>
    <property type="match status" value="1"/>
</dbReference>
<dbReference type="PRINTS" id="PR00973">
    <property type="entry name" value="RIBOSOMALS17"/>
</dbReference>
<dbReference type="SUPFAM" id="SSF50249">
    <property type="entry name" value="Nucleic acid-binding proteins"/>
    <property type="match status" value="1"/>
</dbReference>
<dbReference type="PROSITE" id="PS00056">
    <property type="entry name" value="RIBOSOMAL_S17"/>
    <property type="match status" value="1"/>
</dbReference>
<reference key="1">
    <citation type="journal article" date="2000" name="Mol. Biol. (Mosk.)">
        <title>Determination and analysis of the nucleotide sequence of a segment of a Mycoplasma gallisepticum strain A5969 chromosome, containing operons S10 and rrn23-5.</title>
        <authorList>
            <person name="Skamrov A.V."/>
            <person name="Gol'dman M.A."/>
            <person name="Feoktistova E.S."/>
            <person name="Bibilashvili R.S."/>
        </authorList>
    </citation>
    <scope>NUCLEOTIDE SEQUENCE [GENOMIC DNA]</scope>
    <source>
        <strain>A5969Var.B</strain>
    </source>
</reference>
<reference key="2">
    <citation type="journal article" date="2003" name="Microbiology">
        <title>The complete genome sequence of the avian pathogen Mycoplasma gallisepticum strain R(low).</title>
        <authorList>
            <person name="Papazisi L."/>
            <person name="Gorton T.S."/>
            <person name="Kutish G."/>
            <person name="Markham P.F."/>
            <person name="Browning G.F."/>
            <person name="Nguyen D.K."/>
            <person name="Swartzell S."/>
            <person name="Madan A."/>
            <person name="Mahairas G."/>
            <person name="Geary S.J."/>
        </authorList>
    </citation>
    <scope>NUCLEOTIDE SEQUENCE [LARGE SCALE GENOMIC DNA]</scope>
    <source>
        <strain>R(low / passage 15 / clone 2)</strain>
    </source>
</reference>
<keyword id="KW-1185">Reference proteome</keyword>
<keyword id="KW-0687">Ribonucleoprotein</keyword>
<keyword id="KW-0689">Ribosomal protein</keyword>
<keyword id="KW-0694">RNA-binding</keyword>
<keyword id="KW-0699">rRNA-binding</keyword>
<feature type="chain" id="PRO_0000128467" description="Small ribosomal subunit protein uS17">
    <location>
        <begin position="1"/>
        <end position="85"/>
    </location>
</feature>
<sequence length="85" mass="9879">MRNSRKVLMGVVVSDKMQKTATVKVESKNRHPFYHKLVISHKKYHVHNEEGENAAKVGDKVLIMETRPLSATKRWRIAKIIERAK</sequence>
<evidence type="ECO:0000255" key="1">
    <source>
        <dbReference type="HAMAP-Rule" id="MF_01345"/>
    </source>
</evidence>
<evidence type="ECO:0000305" key="2"/>
<gene>
    <name evidence="1" type="primary">rpsQ</name>
    <name evidence="1" type="synonym">rps17</name>
    <name type="ordered locus">MYCGA0600</name>
    <name type="ORF">MGA_0725</name>
</gene>
<comment type="function">
    <text evidence="1">One of the primary rRNA binding proteins, it binds specifically to the 5'-end of 16S ribosomal RNA.</text>
</comment>
<comment type="subunit">
    <text evidence="1">Part of the 30S ribosomal subunit.</text>
</comment>
<comment type="similarity">
    <text evidence="1">Belongs to the universal ribosomal protein uS17 family.</text>
</comment>
<name>RS17_MYCGA</name>
<organism>
    <name type="scientific">Mycoplasmoides gallisepticum (strain R(low / passage 15 / clone 2))</name>
    <name type="common">Mycoplasma gallisepticum</name>
    <dbReference type="NCBI Taxonomy" id="710127"/>
    <lineage>
        <taxon>Bacteria</taxon>
        <taxon>Bacillati</taxon>
        <taxon>Mycoplasmatota</taxon>
        <taxon>Mycoplasmoidales</taxon>
        <taxon>Mycoplasmoidaceae</taxon>
        <taxon>Mycoplasmoides</taxon>
    </lineage>
</organism>
<proteinExistence type="inferred from homology"/>